<evidence type="ECO:0000255" key="1">
    <source>
        <dbReference type="HAMAP-Rule" id="MF_00357"/>
    </source>
</evidence>
<evidence type="ECO:0000255" key="2">
    <source>
        <dbReference type="PROSITE-ProRule" id="PRU01261"/>
    </source>
</evidence>
<evidence type="ECO:0000256" key="3">
    <source>
        <dbReference type="SAM" id="MobiDB-lite"/>
    </source>
</evidence>
<protein>
    <recommendedName>
        <fullName evidence="1">Probable DNA-directed RNA polymerase subunit delta</fullName>
    </recommendedName>
    <alternativeName>
        <fullName evidence="1">RNAP delta factor</fullName>
    </alternativeName>
</protein>
<feature type="chain" id="PRO_0000204320" description="Probable DNA-directed RNA polymerase subunit delta">
    <location>
        <begin position="1"/>
        <end position="176"/>
    </location>
</feature>
<feature type="domain" description="HTH HARE-type" evidence="2">
    <location>
        <begin position="14"/>
        <end position="81"/>
    </location>
</feature>
<feature type="region of interest" description="Disordered" evidence="3">
    <location>
        <begin position="114"/>
        <end position="176"/>
    </location>
</feature>
<feature type="compositionally biased region" description="Acidic residues" evidence="3">
    <location>
        <begin position="116"/>
        <end position="145"/>
    </location>
</feature>
<feature type="compositionally biased region" description="Acidic residues" evidence="3">
    <location>
        <begin position="153"/>
        <end position="176"/>
    </location>
</feature>
<name>RPOE_STAAC</name>
<reference key="1">
    <citation type="journal article" date="2005" name="J. Bacteriol.">
        <title>Insights on evolution of virulence and resistance from the complete genome analysis of an early methicillin-resistant Staphylococcus aureus strain and a biofilm-producing methicillin-resistant Staphylococcus epidermidis strain.</title>
        <authorList>
            <person name="Gill S.R."/>
            <person name="Fouts D.E."/>
            <person name="Archer G.L."/>
            <person name="Mongodin E.F."/>
            <person name="DeBoy R.T."/>
            <person name="Ravel J."/>
            <person name="Paulsen I.T."/>
            <person name="Kolonay J.F."/>
            <person name="Brinkac L.M."/>
            <person name="Beanan M.J."/>
            <person name="Dodson R.J."/>
            <person name="Daugherty S.C."/>
            <person name="Madupu R."/>
            <person name="Angiuoli S.V."/>
            <person name="Durkin A.S."/>
            <person name="Haft D.H."/>
            <person name="Vamathevan J.J."/>
            <person name="Khouri H."/>
            <person name="Utterback T.R."/>
            <person name="Lee C."/>
            <person name="Dimitrov G."/>
            <person name="Jiang L."/>
            <person name="Qin H."/>
            <person name="Weidman J."/>
            <person name="Tran K."/>
            <person name="Kang K.H."/>
            <person name="Hance I.R."/>
            <person name="Nelson K.E."/>
            <person name="Fraser C.M."/>
        </authorList>
    </citation>
    <scope>NUCLEOTIDE SEQUENCE [LARGE SCALE GENOMIC DNA]</scope>
    <source>
        <strain>COL</strain>
    </source>
</reference>
<accession>Q5HE72</accession>
<dbReference type="EMBL" id="CP000046">
    <property type="protein sequence ID" value="AAW38430.1"/>
    <property type="molecule type" value="Genomic_DNA"/>
</dbReference>
<dbReference type="RefSeq" id="WP_000701483.1">
    <property type="nucleotide sequence ID" value="NZ_JBGOFO010000007.1"/>
</dbReference>
<dbReference type="SMR" id="Q5HE72"/>
<dbReference type="GeneID" id="98346435"/>
<dbReference type="KEGG" id="sac:SACOL2120"/>
<dbReference type="HOGENOM" id="CLU_116648_1_0_9"/>
<dbReference type="Proteomes" id="UP000000530">
    <property type="component" value="Chromosome"/>
</dbReference>
<dbReference type="GO" id="GO:0000428">
    <property type="term" value="C:DNA-directed RNA polymerase complex"/>
    <property type="evidence" value="ECO:0007669"/>
    <property type="project" value="UniProtKB-KW"/>
</dbReference>
<dbReference type="GO" id="GO:0003899">
    <property type="term" value="F:DNA-directed RNA polymerase activity"/>
    <property type="evidence" value="ECO:0007669"/>
    <property type="project" value="UniProtKB-UniRule"/>
</dbReference>
<dbReference type="GO" id="GO:0006351">
    <property type="term" value="P:DNA-templated transcription"/>
    <property type="evidence" value="ECO:0007669"/>
    <property type="project" value="InterPro"/>
</dbReference>
<dbReference type="GO" id="GO:0006355">
    <property type="term" value="P:regulation of DNA-templated transcription"/>
    <property type="evidence" value="ECO:0007669"/>
    <property type="project" value="UniProtKB-UniRule"/>
</dbReference>
<dbReference type="Gene3D" id="1.10.10.1250">
    <property type="entry name" value="RNA polymerase, subunit delta, N-terminal domain"/>
    <property type="match status" value="1"/>
</dbReference>
<dbReference type="HAMAP" id="MF_00357">
    <property type="entry name" value="RNApol_bact_RpoE"/>
    <property type="match status" value="1"/>
</dbReference>
<dbReference type="InterPro" id="IPR007759">
    <property type="entry name" value="Asxl_HARE-HTH"/>
</dbReference>
<dbReference type="InterPro" id="IPR038087">
    <property type="entry name" value="RNAP_delta_N_dom_sf"/>
</dbReference>
<dbReference type="InterPro" id="IPR029757">
    <property type="entry name" value="RpoE"/>
</dbReference>
<dbReference type="NCBIfam" id="TIGR04567">
    <property type="entry name" value="RNAP_delt_lowGC"/>
    <property type="match status" value="1"/>
</dbReference>
<dbReference type="Pfam" id="PF05066">
    <property type="entry name" value="HARE-HTH"/>
    <property type="match status" value="1"/>
</dbReference>
<dbReference type="PROSITE" id="PS51913">
    <property type="entry name" value="HTH_HARE"/>
    <property type="match status" value="1"/>
</dbReference>
<keyword id="KW-0240">DNA-directed RNA polymerase</keyword>
<keyword id="KW-0548">Nucleotidyltransferase</keyword>
<keyword id="KW-0804">Transcription</keyword>
<keyword id="KW-0808">Transferase</keyword>
<gene>
    <name evidence="1" type="primary">rpoE</name>
    <name type="ordered locus">SACOL2120</name>
</gene>
<proteinExistence type="inferred from homology"/>
<organism>
    <name type="scientific">Staphylococcus aureus (strain COL)</name>
    <dbReference type="NCBI Taxonomy" id="93062"/>
    <lineage>
        <taxon>Bacteria</taxon>
        <taxon>Bacillati</taxon>
        <taxon>Bacillota</taxon>
        <taxon>Bacilli</taxon>
        <taxon>Bacillales</taxon>
        <taxon>Staphylococcaceae</taxon>
        <taxon>Staphylococcus</taxon>
    </lineage>
</organism>
<sequence length="176" mass="20881">MKIQDYTKQMVDEKSFIDMAYTLLNDKGETMNLYDIIDEFRALGDYEYEEIENRVVQFYTDLNTDGRFLNVGENLWGLRDWYSVDDIEEKIAPTIQKFDILDADDEEDQNLKLLGEDEMDDDDDIPAQTDDQEELNDPEDEQVEEEINHSDIVIEEDEDELDEDEEVFEDEEDFND</sequence>
<comment type="function">
    <text evidence="1">Participates in both the initiation and recycling phases of transcription. In the presence of the delta subunit, RNAP displays an increased specificity of transcription, a decreased affinity for nucleic acids, and an increased efficiency of RNA synthesis because of enhanced recycling.</text>
</comment>
<comment type="subunit">
    <text evidence="1">RNAP is composed of a core of 2 alpha, a beta and a beta' subunits. The core is associated with a delta subunit and one of several sigma factors.</text>
</comment>
<comment type="similarity">
    <text evidence="1">Belongs to the RpoE family.</text>
</comment>